<keyword id="KW-0010">Activator</keyword>
<keyword id="KW-0963">Cytoplasm</keyword>
<keyword id="KW-0238">DNA-binding</keyword>
<keyword id="KW-0276">Fatty acid metabolism</keyword>
<keyword id="KW-0443">Lipid metabolism</keyword>
<keyword id="KW-0678">Repressor</keyword>
<keyword id="KW-0804">Transcription</keyword>
<keyword id="KW-0805">Transcription regulation</keyword>
<organism>
    <name type="scientific">Escherichia coli O17:K52:H18 (strain UMN026 / ExPEC)</name>
    <dbReference type="NCBI Taxonomy" id="585056"/>
    <lineage>
        <taxon>Bacteria</taxon>
        <taxon>Pseudomonadati</taxon>
        <taxon>Pseudomonadota</taxon>
        <taxon>Gammaproteobacteria</taxon>
        <taxon>Enterobacterales</taxon>
        <taxon>Enterobacteriaceae</taxon>
        <taxon>Escherichia</taxon>
    </lineage>
</organism>
<accession>B7N3Z1</accession>
<dbReference type="EMBL" id="CU928163">
    <property type="protein sequence ID" value="CAR12684.1"/>
    <property type="molecule type" value="Genomic_DNA"/>
</dbReference>
<dbReference type="RefSeq" id="WP_000234823.1">
    <property type="nucleotide sequence ID" value="NC_011751.1"/>
</dbReference>
<dbReference type="RefSeq" id="YP_002412221.1">
    <property type="nucleotide sequence ID" value="NC_011751.1"/>
</dbReference>
<dbReference type="SMR" id="B7N3Z1"/>
<dbReference type="STRING" id="585056.ECUMN_1476"/>
<dbReference type="GeneID" id="93776245"/>
<dbReference type="KEGG" id="eum:ECUMN_1476"/>
<dbReference type="PATRIC" id="fig|585056.7.peg.1672"/>
<dbReference type="HOGENOM" id="CLU_017584_9_4_6"/>
<dbReference type="Proteomes" id="UP000007097">
    <property type="component" value="Chromosome"/>
</dbReference>
<dbReference type="GO" id="GO:0005737">
    <property type="term" value="C:cytoplasm"/>
    <property type="evidence" value="ECO:0007669"/>
    <property type="project" value="UniProtKB-SubCell"/>
</dbReference>
<dbReference type="GO" id="GO:0003677">
    <property type="term" value="F:DNA binding"/>
    <property type="evidence" value="ECO:0007669"/>
    <property type="project" value="UniProtKB-KW"/>
</dbReference>
<dbReference type="GO" id="GO:0003700">
    <property type="term" value="F:DNA-binding transcription factor activity"/>
    <property type="evidence" value="ECO:0007669"/>
    <property type="project" value="UniProtKB-UniRule"/>
</dbReference>
<dbReference type="GO" id="GO:0000062">
    <property type="term" value="F:fatty-acyl-CoA binding"/>
    <property type="evidence" value="ECO:0007669"/>
    <property type="project" value="InterPro"/>
</dbReference>
<dbReference type="GO" id="GO:0006631">
    <property type="term" value="P:fatty acid metabolic process"/>
    <property type="evidence" value="ECO:0007669"/>
    <property type="project" value="UniProtKB-KW"/>
</dbReference>
<dbReference type="GO" id="GO:0019217">
    <property type="term" value="P:regulation of fatty acid metabolic process"/>
    <property type="evidence" value="ECO:0007669"/>
    <property type="project" value="UniProtKB-UniRule"/>
</dbReference>
<dbReference type="CDD" id="cd07377">
    <property type="entry name" value="WHTH_GntR"/>
    <property type="match status" value="1"/>
</dbReference>
<dbReference type="FunFam" id="1.10.10.10:FF:000036">
    <property type="entry name" value="Fatty acid metabolism regulator protein"/>
    <property type="match status" value="1"/>
</dbReference>
<dbReference type="FunFam" id="1.20.120.530:FF:000003">
    <property type="entry name" value="Fatty acid metabolism regulator protein"/>
    <property type="match status" value="1"/>
</dbReference>
<dbReference type="Gene3D" id="1.20.120.530">
    <property type="entry name" value="GntR ligand-binding domain-like"/>
    <property type="match status" value="1"/>
</dbReference>
<dbReference type="Gene3D" id="1.10.10.10">
    <property type="entry name" value="Winged helix-like DNA-binding domain superfamily/Winged helix DNA-binding domain"/>
    <property type="match status" value="1"/>
</dbReference>
<dbReference type="HAMAP" id="MF_00696">
    <property type="entry name" value="HTH_FadR"/>
    <property type="match status" value="1"/>
</dbReference>
<dbReference type="InterPro" id="IPR014178">
    <property type="entry name" value="FA-response_TF_FadR"/>
</dbReference>
<dbReference type="InterPro" id="IPR028374">
    <property type="entry name" value="FadR_C"/>
</dbReference>
<dbReference type="InterPro" id="IPR008920">
    <property type="entry name" value="TF_FadR/GntR_C"/>
</dbReference>
<dbReference type="InterPro" id="IPR000524">
    <property type="entry name" value="Tscrpt_reg_HTH_GntR"/>
</dbReference>
<dbReference type="InterPro" id="IPR036388">
    <property type="entry name" value="WH-like_DNA-bd_sf"/>
</dbReference>
<dbReference type="InterPro" id="IPR036390">
    <property type="entry name" value="WH_DNA-bd_sf"/>
</dbReference>
<dbReference type="NCBIfam" id="TIGR02812">
    <property type="entry name" value="fadR_gamma"/>
    <property type="match status" value="1"/>
</dbReference>
<dbReference type="NCBIfam" id="NF003444">
    <property type="entry name" value="PRK04984.1"/>
    <property type="match status" value="1"/>
</dbReference>
<dbReference type="PANTHER" id="PTHR43537:SF52">
    <property type="entry name" value="FATTY ACID METABOLISM REGULATOR PROTEIN"/>
    <property type="match status" value="1"/>
</dbReference>
<dbReference type="PANTHER" id="PTHR43537">
    <property type="entry name" value="TRANSCRIPTIONAL REGULATOR, GNTR FAMILY"/>
    <property type="match status" value="1"/>
</dbReference>
<dbReference type="Pfam" id="PF07840">
    <property type="entry name" value="FadR_C"/>
    <property type="match status" value="1"/>
</dbReference>
<dbReference type="Pfam" id="PF00392">
    <property type="entry name" value="GntR"/>
    <property type="match status" value="1"/>
</dbReference>
<dbReference type="PRINTS" id="PR00035">
    <property type="entry name" value="HTHGNTR"/>
</dbReference>
<dbReference type="SMART" id="SM00345">
    <property type="entry name" value="HTH_GNTR"/>
    <property type="match status" value="1"/>
</dbReference>
<dbReference type="SUPFAM" id="SSF48008">
    <property type="entry name" value="GntR ligand-binding domain-like"/>
    <property type="match status" value="1"/>
</dbReference>
<dbReference type="SUPFAM" id="SSF46785">
    <property type="entry name" value="Winged helix' DNA-binding domain"/>
    <property type="match status" value="1"/>
</dbReference>
<dbReference type="PROSITE" id="PS50949">
    <property type="entry name" value="HTH_GNTR"/>
    <property type="match status" value="1"/>
</dbReference>
<evidence type="ECO:0000255" key="1">
    <source>
        <dbReference type="HAMAP-Rule" id="MF_00696"/>
    </source>
</evidence>
<reference key="1">
    <citation type="journal article" date="2009" name="PLoS Genet.">
        <title>Organised genome dynamics in the Escherichia coli species results in highly diverse adaptive paths.</title>
        <authorList>
            <person name="Touchon M."/>
            <person name="Hoede C."/>
            <person name="Tenaillon O."/>
            <person name="Barbe V."/>
            <person name="Baeriswyl S."/>
            <person name="Bidet P."/>
            <person name="Bingen E."/>
            <person name="Bonacorsi S."/>
            <person name="Bouchier C."/>
            <person name="Bouvet O."/>
            <person name="Calteau A."/>
            <person name="Chiapello H."/>
            <person name="Clermont O."/>
            <person name="Cruveiller S."/>
            <person name="Danchin A."/>
            <person name="Diard M."/>
            <person name="Dossat C."/>
            <person name="Karoui M.E."/>
            <person name="Frapy E."/>
            <person name="Garry L."/>
            <person name="Ghigo J.M."/>
            <person name="Gilles A.M."/>
            <person name="Johnson J."/>
            <person name="Le Bouguenec C."/>
            <person name="Lescat M."/>
            <person name="Mangenot S."/>
            <person name="Martinez-Jehanne V."/>
            <person name="Matic I."/>
            <person name="Nassif X."/>
            <person name="Oztas S."/>
            <person name="Petit M.A."/>
            <person name="Pichon C."/>
            <person name="Rouy Z."/>
            <person name="Ruf C.S."/>
            <person name="Schneider D."/>
            <person name="Tourret J."/>
            <person name="Vacherie B."/>
            <person name="Vallenet D."/>
            <person name="Medigue C."/>
            <person name="Rocha E.P.C."/>
            <person name="Denamur E."/>
        </authorList>
    </citation>
    <scope>NUCLEOTIDE SEQUENCE [LARGE SCALE GENOMIC DNA]</scope>
    <source>
        <strain>UMN026 / ExPEC</strain>
    </source>
</reference>
<comment type="function">
    <text evidence="1">Multifunctional regulator of fatty acid metabolism.</text>
</comment>
<comment type="subunit">
    <text evidence="1">Homodimer.</text>
</comment>
<comment type="subcellular location">
    <subcellularLocation>
        <location evidence="1">Cytoplasm</location>
    </subcellularLocation>
</comment>
<name>FADR_ECOLU</name>
<protein>
    <recommendedName>
        <fullName evidence="1">Fatty acid metabolism regulator protein</fullName>
    </recommendedName>
</protein>
<sequence>MVIKAQSPAGFAEEYIIESIWNNRFPPGTILPAERELSELIGVTRTTLREVLQRLARDGWLTIQHGKPTKVNNFWETSGLNILETLARLDHESVPQLIDNLLSVRTNISTIFIRTAFRQHPDKAQEVLATANEVADHADAFAELDYNIFRGLAFASGNPIYGLILNGMKGLYTRIGRHYFANPEARSLALGFYHKLSALCSEGAHDQVYETVRRYGHESGEIWHRMQKNLPGDLAIQGR</sequence>
<gene>
    <name evidence="1" type="primary">fadR</name>
    <name type="ordered locus">ECUMN_1476</name>
</gene>
<feature type="chain" id="PRO_1000132317" description="Fatty acid metabolism regulator protein">
    <location>
        <begin position="1"/>
        <end position="239"/>
    </location>
</feature>
<feature type="domain" description="HTH gntR-type" evidence="1">
    <location>
        <begin position="6"/>
        <end position="74"/>
    </location>
</feature>
<feature type="DNA-binding region" description="H-T-H motif" evidence="1">
    <location>
        <begin position="34"/>
        <end position="53"/>
    </location>
</feature>
<proteinExistence type="inferred from homology"/>